<evidence type="ECO:0000255" key="1">
    <source>
        <dbReference type="PROSITE-ProRule" id="PRU00037"/>
    </source>
</evidence>
<evidence type="ECO:0000303" key="2">
    <source>
    </source>
</evidence>
<gene>
    <name type="primary">Klhl28</name>
    <name type="synonym">Btbd5</name>
</gene>
<keyword id="KW-0025">Alternative splicing</keyword>
<keyword id="KW-0880">Kelch repeat</keyword>
<keyword id="KW-1185">Reference proteome</keyword>
<keyword id="KW-0677">Repeat</keyword>
<proteinExistence type="evidence at transcript level"/>
<protein>
    <recommendedName>
        <fullName>Kelch-like protein 28</fullName>
    </recommendedName>
    <alternativeName>
        <fullName>BTB/POZ domain-containing protein 5</fullName>
    </alternativeName>
</protein>
<accession>Q9CR40</accession>
<accession>Q9CYV0</accession>
<name>KLH28_MOUSE</name>
<dbReference type="EMBL" id="AK002637">
    <property type="protein sequence ID" value="BAB22250.1"/>
    <property type="molecule type" value="mRNA"/>
</dbReference>
<dbReference type="EMBL" id="AK012778">
    <property type="protein sequence ID" value="BAB28463.1"/>
    <property type="molecule type" value="mRNA"/>
</dbReference>
<dbReference type="EMBL" id="AK013278">
    <property type="protein sequence ID" value="BAB28765.1"/>
    <property type="molecule type" value="mRNA"/>
</dbReference>
<dbReference type="EMBL" id="AK014466">
    <property type="protein sequence ID" value="BAB29371.1"/>
    <property type="molecule type" value="mRNA"/>
</dbReference>
<dbReference type="EMBL" id="AK016422">
    <property type="protein sequence ID" value="BAB30225.1"/>
    <property type="molecule type" value="mRNA"/>
</dbReference>
<dbReference type="EMBL" id="BC037017">
    <property type="protein sequence ID" value="AAH37017.1"/>
    <property type="molecule type" value="mRNA"/>
</dbReference>
<dbReference type="CCDS" id="CCDS25938.1">
    <molecule id="Q9CR40-1"/>
</dbReference>
<dbReference type="RefSeq" id="NP_079983.1">
    <molecule id="Q9CR40-1"/>
    <property type="nucleotide sequence ID" value="NM_025707.3"/>
</dbReference>
<dbReference type="RefSeq" id="XP_006516219.1">
    <molecule id="Q9CR40-1"/>
    <property type="nucleotide sequence ID" value="XM_006516156.5"/>
</dbReference>
<dbReference type="SMR" id="Q9CR40"/>
<dbReference type="BioGRID" id="211647">
    <property type="interactions" value="1"/>
</dbReference>
<dbReference type="FunCoup" id="Q9CR40">
    <property type="interactions" value="193"/>
</dbReference>
<dbReference type="STRING" id="10090.ENSMUSP00000152602"/>
<dbReference type="PhosphoSitePlus" id="Q9CR40"/>
<dbReference type="PaxDb" id="10090-ENSMUSP00000021331"/>
<dbReference type="ProteomicsDB" id="265002">
    <molecule id="Q9CR40-1"/>
</dbReference>
<dbReference type="ProteomicsDB" id="265003">
    <molecule id="Q9CR40-2"/>
</dbReference>
<dbReference type="Antibodypedia" id="10174">
    <property type="antibodies" value="149 antibodies from 21 providers"/>
</dbReference>
<dbReference type="Ensembl" id="ENSMUST00000021331.9">
    <molecule id="Q9CR40-1"/>
    <property type="protein sequence ID" value="ENSMUSP00000021331.8"/>
    <property type="gene ID" value="ENSMUSG00000020948.10"/>
</dbReference>
<dbReference type="Ensembl" id="ENSMUST00000222508.2">
    <molecule id="Q9CR40-1"/>
    <property type="protein sequence ID" value="ENSMUSP00000152602.2"/>
    <property type="gene ID" value="ENSMUSG00000020948.10"/>
</dbReference>
<dbReference type="GeneID" id="66689"/>
<dbReference type="KEGG" id="mmu:66689"/>
<dbReference type="UCSC" id="uc007nqp.1">
    <molecule id="Q9CR40-1"/>
    <property type="organism name" value="mouse"/>
</dbReference>
<dbReference type="AGR" id="MGI:1913939"/>
<dbReference type="CTD" id="54813"/>
<dbReference type="MGI" id="MGI:1913939">
    <property type="gene designation" value="Klhl28"/>
</dbReference>
<dbReference type="VEuPathDB" id="HostDB:ENSMUSG00000020948"/>
<dbReference type="eggNOG" id="KOG4441">
    <property type="taxonomic scope" value="Eukaryota"/>
</dbReference>
<dbReference type="GeneTree" id="ENSGT00940000158586"/>
<dbReference type="HOGENOM" id="CLU_004253_14_2_1"/>
<dbReference type="InParanoid" id="Q9CR40"/>
<dbReference type="OMA" id="TAGMMYC"/>
<dbReference type="OrthoDB" id="45365at2759"/>
<dbReference type="PhylomeDB" id="Q9CR40"/>
<dbReference type="TreeFam" id="TF329218"/>
<dbReference type="BioGRID-ORCS" id="66689">
    <property type="hits" value="4 hits in 78 CRISPR screens"/>
</dbReference>
<dbReference type="PRO" id="PR:Q9CR40"/>
<dbReference type="Proteomes" id="UP000000589">
    <property type="component" value="Chromosome 12"/>
</dbReference>
<dbReference type="RNAct" id="Q9CR40">
    <property type="molecule type" value="protein"/>
</dbReference>
<dbReference type="Bgee" id="ENSMUSG00000020948">
    <property type="expression patterns" value="Expressed in olfactory epithelium and 227 other cell types or tissues"/>
</dbReference>
<dbReference type="CDD" id="cd18467">
    <property type="entry name" value="BACK_KLHL28_BTBD5"/>
    <property type="match status" value="1"/>
</dbReference>
<dbReference type="CDD" id="cd18257">
    <property type="entry name" value="BTB_POZ_KLHL28_BTBD5"/>
    <property type="match status" value="1"/>
</dbReference>
<dbReference type="FunFam" id="1.25.40.420:FF:000001">
    <property type="entry name" value="Kelch-like family member 12"/>
    <property type="match status" value="1"/>
</dbReference>
<dbReference type="FunFam" id="3.30.710.10:FF:000001">
    <property type="entry name" value="Kelch-like family member 20"/>
    <property type="match status" value="1"/>
</dbReference>
<dbReference type="Gene3D" id="1.25.40.420">
    <property type="match status" value="1"/>
</dbReference>
<dbReference type="Gene3D" id="2.120.10.80">
    <property type="entry name" value="Kelch-type beta propeller"/>
    <property type="match status" value="2"/>
</dbReference>
<dbReference type="Gene3D" id="3.30.710.10">
    <property type="entry name" value="Potassium Channel Kv1.1, Chain A"/>
    <property type="match status" value="1"/>
</dbReference>
<dbReference type="InterPro" id="IPR011705">
    <property type="entry name" value="BACK"/>
</dbReference>
<dbReference type="InterPro" id="IPR017096">
    <property type="entry name" value="BTB-kelch_protein"/>
</dbReference>
<dbReference type="InterPro" id="IPR000210">
    <property type="entry name" value="BTB/POZ_dom"/>
</dbReference>
<dbReference type="InterPro" id="IPR011043">
    <property type="entry name" value="Gal_Oxase/kelch_b-propeller"/>
</dbReference>
<dbReference type="InterPro" id="IPR015915">
    <property type="entry name" value="Kelch-typ_b-propeller"/>
</dbReference>
<dbReference type="InterPro" id="IPR006652">
    <property type="entry name" value="Kelch_1"/>
</dbReference>
<dbReference type="InterPro" id="IPR011333">
    <property type="entry name" value="SKP1/BTB/POZ_sf"/>
</dbReference>
<dbReference type="PANTHER" id="PTHR24412">
    <property type="entry name" value="KELCH PROTEIN"/>
    <property type="match status" value="1"/>
</dbReference>
<dbReference type="PANTHER" id="PTHR24412:SF441">
    <property type="entry name" value="KELCH-LIKE PROTEIN 28"/>
    <property type="match status" value="1"/>
</dbReference>
<dbReference type="Pfam" id="PF07707">
    <property type="entry name" value="BACK"/>
    <property type="match status" value="1"/>
</dbReference>
<dbReference type="Pfam" id="PF00651">
    <property type="entry name" value="BTB"/>
    <property type="match status" value="1"/>
</dbReference>
<dbReference type="Pfam" id="PF01344">
    <property type="entry name" value="Kelch_1"/>
    <property type="match status" value="5"/>
</dbReference>
<dbReference type="PIRSF" id="PIRSF037037">
    <property type="entry name" value="Kelch-like_protein_gigaxonin"/>
    <property type="match status" value="1"/>
</dbReference>
<dbReference type="SMART" id="SM00875">
    <property type="entry name" value="BACK"/>
    <property type="match status" value="1"/>
</dbReference>
<dbReference type="SMART" id="SM00225">
    <property type="entry name" value="BTB"/>
    <property type="match status" value="1"/>
</dbReference>
<dbReference type="SMART" id="SM00612">
    <property type="entry name" value="Kelch"/>
    <property type="match status" value="6"/>
</dbReference>
<dbReference type="SUPFAM" id="SSF50965">
    <property type="entry name" value="Galactose oxidase, central domain"/>
    <property type="match status" value="2"/>
</dbReference>
<dbReference type="SUPFAM" id="SSF54695">
    <property type="entry name" value="POZ domain"/>
    <property type="match status" value="1"/>
</dbReference>
<dbReference type="PROSITE" id="PS50097">
    <property type="entry name" value="BTB"/>
    <property type="match status" value="1"/>
</dbReference>
<organism>
    <name type="scientific">Mus musculus</name>
    <name type="common">Mouse</name>
    <dbReference type="NCBI Taxonomy" id="10090"/>
    <lineage>
        <taxon>Eukaryota</taxon>
        <taxon>Metazoa</taxon>
        <taxon>Chordata</taxon>
        <taxon>Craniata</taxon>
        <taxon>Vertebrata</taxon>
        <taxon>Euteleostomi</taxon>
        <taxon>Mammalia</taxon>
        <taxon>Eutheria</taxon>
        <taxon>Euarchontoglires</taxon>
        <taxon>Glires</taxon>
        <taxon>Rodentia</taxon>
        <taxon>Myomorpha</taxon>
        <taxon>Muroidea</taxon>
        <taxon>Muridae</taxon>
        <taxon>Murinae</taxon>
        <taxon>Mus</taxon>
        <taxon>Mus</taxon>
    </lineage>
</organism>
<sequence length="571" mass="64125">MDHTAPTYMLANLTHLHSEQLLQGLNLLRQHHELCDIILRVGDVKIHAHKVVLASISPYFKAMFTGNLSEKENSEVEFQCIDEAALQAIVEYAYTGTVFISQDTVESLLPAANLLQIKLVLKECCAFLESQLDPGNCIGISRFAETYGCHDLYLAATKFICQNFESVCQTEEFFELTHADLDEIVSNDCLNVATEETVFYALESWIKYDVQERQKYLAQLLNSVRLPLLSVKFLTRLYEANHLIRDDRTCKHLLNEALKYHFMPEHRLSHQTVLMTRPRCAPKVLCAVGGKSGLFACLDSVEMYFPQNDSWIGLAPLNIPRYEFGICVLDQKVFVIGGIETSVRPGMTVRKHENSVECWNPDTNTWTSLERMNESRSTLGVAVLAGEVFALGGYDGQSYLQSVEKYIPKIRQWQPVAPMTTTRSCFAAAVLDGMLYAIGGYGPAHMNSVERYDPSKDSWEMVAPMADKRIHFGVGVMLGFIFVVGGHNGVSHLSSIERYDPHQNQWTVCRPMKEPRTGVGAAVIDNYLYVVGGHSGSSYLNTVQKYDPISDTWLDSAGMIYCRCNFGLTAL</sequence>
<reference key="1">
    <citation type="journal article" date="2005" name="Science">
        <title>The transcriptional landscape of the mammalian genome.</title>
        <authorList>
            <person name="Carninci P."/>
            <person name="Kasukawa T."/>
            <person name="Katayama S."/>
            <person name="Gough J."/>
            <person name="Frith M.C."/>
            <person name="Maeda N."/>
            <person name="Oyama R."/>
            <person name="Ravasi T."/>
            <person name="Lenhard B."/>
            <person name="Wells C."/>
            <person name="Kodzius R."/>
            <person name="Shimokawa K."/>
            <person name="Bajic V.B."/>
            <person name="Brenner S.E."/>
            <person name="Batalov S."/>
            <person name="Forrest A.R."/>
            <person name="Zavolan M."/>
            <person name="Davis M.J."/>
            <person name="Wilming L.G."/>
            <person name="Aidinis V."/>
            <person name="Allen J.E."/>
            <person name="Ambesi-Impiombato A."/>
            <person name="Apweiler R."/>
            <person name="Aturaliya R.N."/>
            <person name="Bailey T.L."/>
            <person name="Bansal M."/>
            <person name="Baxter L."/>
            <person name="Beisel K.W."/>
            <person name="Bersano T."/>
            <person name="Bono H."/>
            <person name="Chalk A.M."/>
            <person name="Chiu K.P."/>
            <person name="Choudhary V."/>
            <person name="Christoffels A."/>
            <person name="Clutterbuck D.R."/>
            <person name="Crowe M.L."/>
            <person name="Dalla E."/>
            <person name="Dalrymple B.P."/>
            <person name="de Bono B."/>
            <person name="Della Gatta G."/>
            <person name="di Bernardo D."/>
            <person name="Down T."/>
            <person name="Engstrom P."/>
            <person name="Fagiolini M."/>
            <person name="Faulkner G."/>
            <person name="Fletcher C.F."/>
            <person name="Fukushima T."/>
            <person name="Furuno M."/>
            <person name="Futaki S."/>
            <person name="Gariboldi M."/>
            <person name="Georgii-Hemming P."/>
            <person name="Gingeras T.R."/>
            <person name="Gojobori T."/>
            <person name="Green R.E."/>
            <person name="Gustincich S."/>
            <person name="Harbers M."/>
            <person name="Hayashi Y."/>
            <person name="Hensch T.K."/>
            <person name="Hirokawa N."/>
            <person name="Hill D."/>
            <person name="Huminiecki L."/>
            <person name="Iacono M."/>
            <person name="Ikeo K."/>
            <person name="Iwama A."/>
            <person name="Ishikawa T."/>
            <person name="Jakt M."/>
            <person name="Kanapin A."/>
            <person name="Katoh M."/>
            <person name="Kawasawa Y."/>
            <person name="Kelso J."/>
            <person name="Kitamura H."/>
            <person name="Kitano H."/>
            <person name="Kollias G."/>
            <person name="Krishnan S.P."/>
            <person name="Kruger A."/>
            <person name="Kummerfeld S.K."/>
            <person name="Kurochkin I.V."/>
            <person name="Lareau L.F."/>
            <person name="Lazarevic D."/>
            <person name="Lipovich L."/>
            <person name="Liu J."/>
            <person name="Liuni S."/>
            <person name="McWilliam S."/>
            <person name="Madan Babu M."/>
            <person name="Madera M."/>
            <person name="Marchionni L."/>
            <person name="Matsuda H."/>
            <person name="Matsuzawa S."/>
            <person name="Miki H."/>
            <person name="Mignone F."/>
            <person name="Miyake S."/>
            <person name="Morris K."/>
            <person name="Mottagui-Tabar S."/>
            <person name="Mulder N."/>
            <person name="Nakano N."/>
            <person name="Nakauchi H."/>
            <person name="Ng P."/>
            <person name="Nilsson R."/>
            <person name="Nishiguchi S."/>
            <person name="Nishikawa S."/>
            <person name="Nori F."/>
            <person name="Ohara O."/>
            <person name="Okazaki Y."/>
            <person name="Orlando V."/>
            <person name="Pang K.C."/>
            <person name="Pavan W.J."/>
            <person name="Pavesi G."/>
            <person name="Pesole G."/>
            <person name="Petrovsky N."/>
            <person name="Piazza S."/>
            <person name="Reed J."/>
            <person name="Reid J.F."/>
            <person name="Ring B.Z."/>
            <person name="Ringwald M."/>
            <person name="Rost B."/>
            <person name="Ruan Y."/>
            <person name="Salzberg S.L."/>
            <person name="Sandelin A."/>
            <person name="Schneider C."/>
            <person name="Schoenbach C."/>
            <person name="Sekiguchi K."/>
            <person name="Semple C.A."/>
            <person name="Seno S."/>
            <person name="Sessa L."/>
            <person name="Sheng Y."/>
            <person name="Shibata Y."/>
            <person name="Shimada H."/>
            <person name="Shimada K."/>
            <person name="Silva D."/>
            <person name="Sinclair B."/>
            <person name="Sperling S."/>
            <person name="Stupka E."/>
            <person name="Sugiura K."/>
            <person name="Sultana R."/>
            <person name="Takenaka Y."/>
            <person name="Taki K."/>
            <person name="Tammoja K."/>
            <person name="Tan S.L."/>
            <person name="Tang S."/>
            <person name="Taylor M.S."/>
            <person name="Tegner J."/>
            <person name="Teichmann S.A."/>
            <person name="Ueda H.R."/>
            <person name="van Nimwegen E."/>
            <person name="Verardo R."/>
            <person name="Wei C.L."/>
            <person name="Yagi K."/>
            <person name="Yamanishi H."/>
            <person name="Zabarovsky E."/>
            <person name="Zhu S."/>
            <person name="Zimmer A."/>
            <person name="Hide W."/>
            <person name="Bult C."/>
            <person name="Grimmond S.M."/>
            <person name="Teasdale R.D."/>
            <person name="Liu E.T."/>
            <person name="Brusic V."/>
            <person name="Quackenbush J."/>
            <person name="Wahlestedt C."/>
            <person name="Mattick J.S."/>
            <person name="Hume D.A."/>
            <person name="Kai C."/>
            <person name="Sasaki D."/>
            <person name="Tomaru Y."/>
            <person name="Fukuda S."/>
            <person name="Kanamori-Katayama M."/>
            <person name="Suzuki M."/>
            <person name="Aoki J."/>
            <person name="Arakawa T."/>
            <person name="Iida J."/>
            <person name="Imamura K."/>
            <person name="Itoh M."/>
            <person name="Kato T."/>
            <person name="Kawaji H."/>
            <person name="Kawagashira N."/>
            <person name="Kawashima T."/>
            <person name="Kojima M."/>
            <person name="Kondo S."/>
            <person name="Konno H."/>
            <person name="Nakano K."/>
            <person name="Ninomiya N."/>
            <person name="Nishio T."/>
            <person name="Okada M."/>
            <person name="Plessy C."/>
            <person name="Shibata K."/>
            <person name="Shiraki T."/>
            <person name="Suzuki S."/>
            <person name="Tagami M."/>
            <person name="Waki K."/>
            <person name="Watahiki A."/>
            <person name="Okamura-Oho Y."/>
            <person name="Suzuki H."/>
            <person name="Kawai J."/>
            <person name="Hayashizaki Y."/>
        </authorList>
    </citation>
    <scope>NUCLEOTIDE SEQUENCE [LARGE SCALE MRNA] (ISOFORMS 1 AND 2)</scope>
    <source>
        <strain>C57BL/6J</strain>
        <tissue>Embryo</tissue>
        <tissue>Kidney</tissue>
        <tissue>Testis</tissue>
    </source>
</reference>
<reference key="2">
    <citation type="journal article" date="2004" name="Genome Res.">
        <title>The status, quality, and expansion of the NIH full-length cDNA project: the Mammalian Gene Collection (MGC).</title>
        <authorList>
            <consortium name="The MGC Project Team"/>
        </authorList>
    </citation>
    <scope>NUCLEOTIDE SEQUENCE [LARGE SCALE MRNA] (ISOFORM 1)</scope>
    <source>
        <strain>FVB/N</strain>
        <tissue>Mammary tumor</tissue>
    </source>
</reference>
<comment type="alternative products">
    <event type="alternative splicing"/>
    <isoform>
        <id>Q9CR40-1</id>
        <name>1</name>
        <sequence type="displayed"/>
    </isoform>
    <isoform>
        <id>Q9CR40-2</id>
        <name>2</name>
        <sequence type="described" ref="VSP_009801"/>
    </isoform>
</comment>
<feature type="chain" id="PRO_0000119065" description="Kelch-like protein 28">
    <location>
        <begin position="1"/>
        <end position="571"/>
    </location>
</feature>
<feature type="domain" description="BTB" evidence="1">
    <location>
        <begin position="35"/>
        <end position="102"/>
    </location>
</feature>
<feature type="repeat" description="Kelch 1">
    <location>
        <begin position="284"/>
        <end position="331"/>
    </location>
</feature>
<feature type="repeat" description="Kelch 2">
    <location>
        <begin position="332"/>
        <end position="386"/>
    </location>
</feature>
<feature type="repeat" description="Kelch 3">
    <location>
        <begin position="387"/>
        <end position="433"/>
    </location>
</feature>
<feature type="repeat" description="Kelch 4">
    <location>
        <begin position="435"/>
        <end position="479"/>
    </location>
</feature>
<feature type="repeat" description="Kelch 5">
    <location>
        <begin position="480"/>
        <end position="526"/>
    </location>
</feature>
<feature type="repeat" description="Kelch 6">
    <location>
        <begin position="528"/>
        <end position="570"/>
    </location>
</feature>
<feature type="splice variant" id="VSP_009801" description="In isoform 2." evidence="2">
    <location>
        <begin position="250"/>
        <end position="571"/>
    </location>
</feature>